<keyword id="KW-0119">Carbohydrate metabolism</keyword>
<keyword id="KW-0963">Cytoplasm</keyword>
<keyword id="KW-0378">Hydrolase</keyword>
<keyword id="KW-0460">Magnesium</keyword>
<keyword id="KW-0479">Metal-binding</keyword>
<keyword id="KW-1185">Reference proteome</keyword>
<gene>
    <name evidence="1" type="primary">fbp</name>
    <name type="ordered locus">TERTU_2731</name>
</gene>
<feature type="chain" id="PRO_1000216151" description="Fructose-1,6-bisphosphatase class 1">
    <location>
        <begin position="1"/>
        <end position="335"/>
    </location>
</feature>
<feature type="binding site" evidence="1">
    <location>
        <position position="92"/>
    </location>
    <ligand>
        <name>Mg(2+)</name>
        <dbReference type="ChEBI" id="CHEBI:18420"/>
        <label>1</label>
    </ligand>
</feature>
<feature type="binding site" evidence="1">
    <location>
        <position position="115"/>
    </location>
    <ligand>
        <name>Mg(2+)</name>
        <dbReference type="ChEBI" id="CHEBI:18420"/>
        <label>1</label>
    </ligand>
</feature>
<feature type="binding site" evidence="1">
    <location>
        <position position="115"/>
    </location>
    <ligand>
        <name>Mg(2+)</name>
        <dbReference type="ChEBI" id="CHEBI:18420"/>
        <label>2</label>
    </ligand>
</feature>
<feature type="binding site" evidence="1">
    <location>
        <position position="117"/>
    </location>
    <ligand>
        <name>Mg(2+)</name>
        <dbReference type="ChEBI" id="CHEBI:18420"/>
        <label>1</label>
    </ligand>
</feature>
<feature type="binding site" evidence="1">
    <location>
        <begin position="118"/>
        <end position="121"/>
    </location>
    <ligand>
        <name>substrate</name>
    </ligand>
</feature>
<feature type="binding site" evidence="1">
    <location>
        <position position="118"/>
    </location>
    <ligand>
        <name>Mg(2+)</name>
        <dbReference type="ChEBI" id="CHEBI:18420"/>
        <label>2</label>
    </ligand>
</feature>
<feature type="binding site" evidence="1">
    <location>
        <position position="211"/>
    </location>
    <ligand>
        <name>substrate</name>
    </ligand>
</feature>
<feature type="binding site" evidence="1">
    <location>
        <position position="244"/>
    </location>
    <ligand>
        <name>substrate</name>
    </ligand>
</feature>
<feature type="binding site" evidence="1">
    <location>
        <begin position="262"/>
        <end position="264"/>
    </location>
    <ligand>
        <name>substrate</name>
    </ligand>
</feature>
<feature type="binding site" evidence="1">
    <location>
        <position position="274"/>
    </location>
    <ligand>
        <name>substrate</name>
    </ligand>
</feature>
<feature type="binding site" evidence="1">
    <location>
        <position position="280"/>
    </location>
    <ligand>
        <name>Mg(2+)</name>
        <dbReference type="ChEBI" id="CHEBI:18420"/>
        <label>2</label>
    </ligand>
</feature>
<name>F16PA_TERTT</name>
<organism>
    <name type="scientific">Teredinibacter turnerae (strain ATCC 39867 / T7901)</name>
    <dbReference type="NCBI Taxonomy" id="377629"/>
    <lineage>
        <taxon>Bacteria</taxon>
        <taxon>Pseudomonadati</taxon>
        <taxon>Pseudomonadota</taxon>
        <taxon>Gammaproteobacteria</taxon>
        <taxon>Cellvibrionales</taxon>
        <taxon>Cellvibrionaceae</taxon>
        <taxon>Teredinibacter</taxon>
    </lineage>
</organism>
<dbReference type="EC" id="3.1.3.11" evidence="1"/>
<dbReference type="EMBL" id="CP001614">
    <property type="protein sequence ID" value="ACR14142.1"/>
    <property type="molecule type" value="Genomic_DNA"/>
</dbReference>
<dbReference type="RefSeq" id="WP_015820258.1">
    <property type="nucleotide sequence ID" value="NC_012997.1"/>
</dbReference>
<dbReference type="SMR" id="C5BMI0"/>
<dbReference type="STRING" id="377629.TERTU_2731"/>
<dbReference type="KEGG" id="ttu:TERTU_2731"/>
<dbReference type="eggNOG" id="COG0158">
    <property type="taxonomic scope" value="Bacteria"/>
</dbReference>
<dbReference type="HOGENOM" id="CLU_039977_2_2_6"/>
<dbReference type="OrthoDB" id="9806756at2"/>
<dbReference type="UniPathway" id="UPA00138"/>
<dbReference type="Proteomes" id="UP000009080">
    <property type="component" value="Chromosome"/>
</dbReference>
<dbReference type="GO" id="GO:0005829">
    <property type="term" value="C:cytosol"/>
    <property type="evidence" value="ECO:0007669"/>
    <property type="project" value="TreeGrafter"/>
</dbReference>
<dbReference type="GO" id="GO:0042132">
    <property type="term" value="F:fructose 1,6-bisphosphate 1-phosphatase activity"/>
    <property type="evidence" value="ECO:0007669"/>
    <property type="project" value="UniProtKB-UniRule"/>
</dbReference>
<dbReference type="GO" id="GO:0000287">
    <property type="term" value="F:magnesium ion binding"/>
    <property type="evidence" value="ECO:0007669"/>
    <property type="project" value="UniProtKB-UniRule"/>
</dbReference>
<dbReference type="GO" id="GO:0030388">
    <property type="term" value="P:fructose 1,6-bisphosphate metabolic process"/>
    <property type="evidence" value="ECO:0007669"/>
    <property type="project" value="TreeGrafter"/>
</dbReference>
<dbReference type="GO" id="GO:0006002">
    <property type="term" value="P:fructose 6-phosphate metabolic process"/>
    <property type="evidence" value="ECO:0007669"/>
    <property type="project" value="TreeGrafter"/>
</dbReference>
<dbReference type="GO" id="GO:0006000">
    <property type="term" value="P:fructose metabolic process"/>
    <property type="evidence" value="ECO:0007669"/>
    <property type="project" value="TreeGrafter"/>
</dbReference>
<dbReference type="GO" id="GO:0006094">
    <property type="term" value="P:gluconeogenesis"/>
    <property type="evidence" value="ECO:0007669"/>
    <property type="project" value="UniProtKB-UniRule"/>
</dbReference>
<dbReference type="GO" id="GO:0005986">
    <property type="term" value="P:sucrose biosynthetic process"/>
    <property type="evidence" value="ECO:0007669"/>
    <property type="project" value="TreeGrafter"/>
</dbReference>
<dbReference type="CDD" id="cd00354">
    <property type="entry name" value="FBPase"/>
    <property type="match status" value="1"/>
</dbReference>
<dbReference type="FunFam" id="3.30.540.10:FF:000002">
    <property type="entry name" value="Fructose-1,6-bisphosphatase class 1"/>
    <property type="match status" value="1"/>
</dbReference>
<dbReference type="FunFam" id="3.40.190.80:FF:000001">
    <property type="entry name" value="Fructose-1,6-bisphosphatase class 1"/>
    <property type="match status" value="1"/>
</dbReference>
<dbReference type="Gene3D" id="3.40.190.80">
    <property type="match status" value="1"/>
</dbReference>
<dbReference type="Gene3D" id="3.30.540.10">
    <property type="entry name" value="Fructose-1,6-Bisphosphatase, subunit A, domain 1"/>
    <property type="match status" value="1"/>
</dbReference>
<dbReference type="HAMAP" id="MF_01855">
    <property type="entry name" value="FBPase_class1"/>
    <property type="match status" value="1"/>
</dbReference>
<dbReference type="InterPro" id="IPR044015">
    <property type="entry name" value="FBPase_C_dom"/>
</dbReference>
<dbReference type="InterPro" id="IPR000146">
    <property type="entry name" value="FBPase_class-1"/>
</dbReference>
<dbReference type="InterPro" id="IPR033391">
    <property type="entry name" value="FBPase_N"/>
</dbReference>
<dbReference type="InterPro" id="IPR028343">
    <property type="entry name" value="FBPtase"/>
</dbReference>
<dbReference type="InterPro" id="IPR020548">
    <property type="entry name" value="Fructose_bisphosphatase_AS"/>
</dbReference>
<dbReference type="NCBIfam" id="NF006778">
    <property type="entry name" value="PRK09293.1-1"/>
    <property type="match status" value="1"/>
</dbReference>
<dbReference type="PANTHER" id="PTHR11556">
    <property type="entry name" value="FRUCTOSE-1,6-BISPHOSPHATASE-RELATED"/>
    <property type="match status" value="1"/>
</dbReference>
<dbReference type="PANTHER" id="PTHR11556:SF35">
    <property type="entry name" value="SEDOHEPTULOSE-1,7-BISPHOSPHATASE, CHLOROPLASTIC"/>
    <property type="match status" value="1"/>
</dbReference>
<dbReference type="Pfam" id="PF00316">
    <property type="entry name" value="FBPase"/>
    <property type="match status" value="1"/>
</dbReference>
<dbReference type="Pfam" id="PF18913">
    <property type="entry name" value="FBPase_C"/>
    <property type="match status" value="1"/>
</dbReference>
<dbReference type="PIRSF" id="PIRSF500210">
    <property type="entry name" value="FBPtase"/>
    <property type="match status" value="1"/>
</dbReference>
<dbReference type="PIRSF" id="PIRSF000904">
    <property type="entry name" value="FBPtase_SBPase"/>
    <property type="match status" value="1"/>
</dbReference>
<dbReference type="PRINTS" id="PR00115">
    <property type="entry name" value="F16BPHPHTASE"/>
</dbReference>
<dbReference type="SUPFAM" id="SSF56655">
    <property type="entry name" value="Carbohydrate phosphatase"/>
    <property type="match status" value="1"/>
</dbReference>
<dbReference type="PROSITE" id="PS00124">
    <property type="entry name" value="FBPASE"/>
    <property type="match status" value="1"/>
</dbReference>
<comment type="catalytic activity">
    <reaction evidence="1">
        <text>beta-D-fructose 1,6-bisphosphate + H2O = beta-D-fructose 6-phosphate + phosphate</text>
        <dbReference type="Rhea" id="RHEA:11064"/>
        <dbReference type="ChEBI" id="CHEBI:15377"/>
        <dbReference type="ChEBI" id="CHEBI:32966"/>
        <dbReference type="ChEBI" id="CHEBI:43474"/>
        <dbReference type="ChEBI" id="CHEBI:57634"/>
        <dbReference type="EC" id="3.1.3.11"/>
    </reaction>
</comment>
<comment type="cofactor">
    <cofactor evidence="1">
        <name>Mg(2+)</name>
        <dbReference type="ChEBI" id="CHEBI:18420"/>
    </cofactor>
    <text evidence="1">Binds 2 magnesium ions per subunit.</text>
</comment>
<comment type="pathway">
    <text evidence="1">Carbohydrate biosynthesis; gluconeogenesis.</text>
</comment>
<comment type="subunit">
    <text evidence="1">Homotetramer.</text>
</comment>
<comment type="subcellular location">
    <subcellularLocation>
        <location evidence="1">Cytoplasm</location>
    </subcellularLocation>
</comment>
<comment type="similarity">
    <text evidence="1">Belongs to the FBPase class 1 family.</text>
</comment>
<reference key="1">
    <citation type="journal article" date="2009" name="PLoS ONE">
        <title>The complete genome of Teredinibacter turnerae T7901: an intracellular endosymbiont of marine wood-boring bivalves (shipworms).</title>
        <authorList>
            <person name="Yang J.C."/>
            <person name="Madupu R."/>
            <person name="Durkin A.S."/>
            <person name="Ekborg N.A."/>
            <person name="Pedamallu C.S."/>
            <person name="Hostetler J.B."/>
            <person name="Radune D."/>
            <person name="Toms B.S."/>
            <person name="Henrissat B."/>
            <person name="Coutinho P.M."/>
            <person name="Schwarz S."/>
            <person name="Field L."/>
            <person name="Trindade-Silva A.E."/>
            <person name="Soares C.A.G."/>
            <person name="Elshahawi S."/>
            <person name="Hanora A."/>
            <person name="Schmidt E.W."/>
            <person name="Haygood M.G."/>
            <person name="Posfai J."/>
            <person name="Benner J."/>
            <person name="Madinger C."/>
            <person name="Nove J."/>
            <person name="Anton B."/>
            <person name="Chaudhary K."/>
            <person name="Foster J."/>
            <person name="Holman A."/>
            <person name="Kumar S."/>
            <person name="Lessard P.A."/>
            <person name="Luyten Y.A."/>
            <person name="Slatko B."/>
            <person name="Wood N."/>
            <person name="Wu B."/>
            <person name="Teplitski M."/>
            <person name="Mougous J.D."/>
            <person name="Ward N."/>
            <person name="Eisen J.A."/>
            <person name="Badger J.H."/>
            <person name="Distel D.L."/>
        </authorList>
    </citation>
    <scope>NUCLEOTIDE SEQUENCE [LARGE SCALE GENOMIC DNA]</scope>
    <source>
        <strain>ATCC 39867 / T7901</strain>
    </source>
</reference>
<protein>
    <recommendedName>
        <fullName evidence="1">Fructose-1,6-bisphosphatase class 1</fullName>
        <shortName evidence="1">FBPase class 1</shortName>
        <ecNumber evidence="1">3.1.3.11</ecNumber>
    </recommendedName>
    <alternativeName>
        <fullName evidence="1">D-fructose-1,6-bisphosphate 1-phosphohydrolase class 1</fullName>
    </alternativeName>
</protein>
<evidence type="ECO:0000255" key="1">
    <source>
        <dbReference type="HAMAP-Rule" id="MF_01855"/>
    </source>
</evidence>
<accession>C5BMI0</accession>
<proteinExistence type="inferred from homology"/>
<sequence>MEITKTLGEFIVDHQNQYPTATGELSALFSSIRLAGKIVHREVNKAGLADIRGAAGGDNIQGEAQQKLDVYANEKFKAALSARGVVCGLASEEEDSFVAFDGQRSLQGKYVVLIDPLDGSSNIDVNVSVGTIFSIYRRISKTGGPVTLEDFLQPGRAQVAAGYIVYGSSTMLVYSTGDGVNGFTYDPSLGVFCLSHENMRCPPEGNIYSVNEGNYVHFPSGIKKYIKFCQEEDKPSGRPYTSRYIGSLVSDFHRNLIKGGIYLYPTSSTYPSGKLRLLYECNPMAFLAEQAGGKALAGVNQPVLDIVPSELHQRSPLIIGSSRMVDKACEFLSEK</sequence>